<protein>
    <recommendedName>
        <fullName evidence="1">Endonuclease MutS2</fullName>
        <ecNumber evidence="1">3.1.-.-</ecNumber>
    </recommendedName>
    <alternativeName>
        <fullName evidence="1">Ribosome-associated protein quality control-upstream factor</fullName>
        <shortName evidence="1">RQC-upstream factor</shortName>
        <shortName evidence="1">RqcU</shortName>
        <ecNumber evidence="1">3.6.4.-</ecNumber>
    </alternativeName>
</protein>
<dbReference type="EC" id="3.1.-.-" evidence="1"/>
<dbReference type="EC" id="3.6.4.-" evidence="1"/>
<dbReference type="EMBL" id="CP001022">
    <property type="protein sequence ID" value="ACB61623.1"/>
    <property type="molecule type" value="Genomic_DNA"/>
</dbReference>
<dbReference type="RefSeq" id="WP_012371040.1">
    <property type="nucleotide sequence ID" value="NC_010556.1"/>
</dbReference>
<dbReference type="SMR" id="B1YJY5"/>
<dbReference type="STRING" id="262543.Exig_2171"/>
<dbReference type="KEGG" id="esi:Exig_2171"/>
<dbReference type="eggNOG" id="COG1193">
    <property type="taxonomic scope" value="Bacteria"/>
</dbReference>
<dbReference type="HOGENOM" id="CLU_011252_2_1_9"/>
<dbReference type="OrthoDB" id="9808166at2"/>
<dbReference type="Proteomes" id="UP000001681">
    <property type="component" value="Chromosome"/>
</dbReference>
<dbReference type="GO" id="GO:0005524">
    <property type="term" value="F:ATP binding"/>
    <property type="evidence" value="ECO:0007669"/>
    <property type="project" value="UniProtKB-UniRule"/>
</dbReference>
<dbReference type="GO" id="GO:0016887">
    <property type="term" value="F:ATP hydrolysis activity"/>
    <property type="evidence" value="ECO:0007669"/>
    <property type="project" value="InterPro"/>
</dbReference>
<dbReference type="GO" id="GO:0140664">
    <property type="term" value="F:ATP-dependent DNA damage sensor activity"/>
    <property type="evidence" value="ECO:0007669"/>
    <property type="project" value="InterPro"/>
</dbReference>
<dbReference type="GO" id="GO:0004519">
    <property type="term" value="F:endonuclease activity"/>
    <property type="evidence" value="ECO:0007669"/>
    <property type="project" value="UniProtKB-UniRule"/>
</dbReference>
<dbReference type="GO" id="GO:0030983">
    <property type="term" value="F:mismatched DNA binding"/>
    <property type="evidence" value="ECO:0007669"/>
    <property type="project" value="InterPro"/>
</dbReference>
<dbReference type="GO" id="GO:0043023">
    <property type="term" value="F:ribosomal large subunit binding"/>
    <property type="evidence" value="ECO:0007669"/>
    <property type="project" value="UniProtKB-UniRule"/>
</dbReference>
<dbReference type="GO" id="GO:0019843">
    <property type="term" value="F:rRNA binding"/>
    <property type="evidence" value="ECO:0007669"/>
    <property type="project" value="UniProtKB-UniRule"/>
</dbReference>
<dbReference type="GO" id="GO:0006298">
    <property type="term" value="P:mismatch repair"/>
    <property type="evidence" value="ECO:0007669"/>
    <property type="project" value="InterPro"/>
</dbReference>
<dbReference type="GO" id="GO:0045910">
    <property type="term" value="P:negative regulation of DNA recombination"/>
    <property type="evidence" value="ECO:0007669"/>
    <property type="project" value="InterPro"/>
</dbReference>
<dbReference type="GO" id="GO:0072344">
    <property type="term" value="P:rescue of stalled ribosome"/>
    <property type="evidence" value="ECO:0007669"/>
    <property type="project" value="UniProtKB-UniRule"/>
</dbReference>
<dbReference type="CDD" id="cd03280">
    <property type="entry name" value="ABC_MutS2"/>
    <property type="match status" value="1"/>
</dbReference>
<dbReference type="FunFam" id="3.40.50.300:FF:000830">
    <property type="entry name" value="Endonuclease MutS2"/>
    <property type="match status" value="1"/>
</dbReference>
<dbReference type="Gene3D" id="3.30.1370.110">
    <property type="match status" value="1"/>
</dbReference>
<dbReference type="Gene3D" id="3.40.50.300">
    <property type="entry name" value="P-loop containing nucleotide triphosphate hydrolases"/>
    <property type="match status" value="1"/>
</dbReference>
<dbReference type="HAMAP" id="MF_00092">
    <property type="entry name" value="MutS2"/>
    <property type="match status" value="1"/>
</dbReference>
<dbReference type="InterPro" id="IPR000432">
    <property type="entry name" value="DNA_mismatch_repair_MutS_C"/>
</dbReference>
<dbReference type="InterPro" id="IPR007696">
    <property type="entry name" value="DNA_mismatch_repair_MutS_core"/>
</dbReference>
<dbReference type="InterPro" id="IPR036187">
    <property type="entry name" value="DNA_mismatch_repair_MutS_sf"/>
</dbReference>
<dbReference type="InterPro" id="IPR046893">
    <property type="entry name" value="MSSS"/>
</dbReference>
<dbReference type="InterPro" id="IPR045076">
    <property type="entry name" value="MutS"/>
</dbReference>
<dbReference type="InterPro" id="IPR005747">
    <property type="entry name" value="MutS2"/>
</dbReference>
<dbReference type="InterPro" id="IPR027417">
    <property type="entry name" value="P-loop_NTPase"/>
</dbReference>
<dbReference type="InterPro" id="IPR002625">
    <property type="entry name" value="Smr_dom"/>
</dbReference>
<dbReference type="InterPro" id="IPR036063">
    <property type="entry name" value="Smr_dom_sf"/>
</dbReference>
<dbReference type="NCBIfam" id="TIGR01069">
    <property type="entry name" value="mutS2"/>
    <property type="match status" value="1"/>
</dbReference>
<dbReference type="PANTHER" id="PTHR48466:SF2">
    <property type="entry name" value="OS10G0509000 PROTEIN"/>
    <property type="match status" value="1"/>
</dbReference>
<dbReference type="PANTHER" id="PTHR48466">
    <property type="entry name" value="OS10G0509000 PROTEIN-RELATED"/>
    <property type="match status" value="1"/>
</dbReference>
<dbReference type="Pfam" id="PF20297">
    <property type="entry name" value="MSSS"/>
    <property type="match status" value="1"/>
</dbReference>
<dbReference type="Pfam" id="PF00488">
    <property type="entry name" value="MutS_V"/>
    <property type="match status" value="1"/>
</dbReference>
<dbReference type="Pfam" id="PF01713">
    <property type="entry name" value="Smr"/>
    <property type="match status" value="1"/>
</dbReference>
<dbReference type="PIRSF" id="PIRSF005814">
    <property type="entry name" value="MutS_YshD"/>
    <property type="match status" value="1"/>
</dbReference>
<dbReference type="SMART" id="SM00534">
    <property type="entry name" value="MUTSac"/>
    <property type="match status" value="1"/>
</dbReference>
<dbReference type="SMART" id="SM00533">
    <property type="entry name" value="MUTSd"/>
    <property type="match status" value="1"/>
</dbReference>
<dbReference type="SMART" id="SM00463">
    <property type="entry name" value="SMR"/>
    <property type="match status" value="1"/>
</dbReference>
<dbReference type="SUPFAM" id="SSF48334">
    <property type="entry name" value="DNA repair protein MutS, domain III"/>
    <property type="match status" value="1"/>
</dbReference>
<dbReference type="SUPFAM" id="SSF52540">
    <property type="entry name" value="P-loop containing nucleoside triphosphate hydrolases"/>
    <property type="match status" value="1"/>
</dbReference>
<dbReference type="SUPFAM" id="SSF160443">
    <property type="entry name" value="SMR domain-like"/>
    <property type="match status" value="1"/>
</dbReference>
<dbReference type="PROSITE" id="PS00486">
    <property type="entry name" value="DNA_MISMATCH_REPAIR_2"/>
    <property type="match status" value="1"/>
</dbReference>
<dbReference type="PROSITE" id="PS50828">
    <property type="entry name" value="SMR"/>
    <property type="match status" value="1"/>
</dbReference>
<sequence>MNANALRVLEYDKLKELLAKQTASSLGAQFVRKMEPAEDFEQVKALLALTTEATTVYRLRDRYPFGGLTDVRSEVKRAEIGSVLSTSELLAVADVVYSGRQVKAFQERLHEDHPDLRLPALDSRIEQITKLVEIEQGIRHAIDDQGTVQDSASDKLRALRSQLRSLEGQVRSKIDGVLRNKSKMLSDAIVTMRNDRYCVPVKQEYRQAFGGIVHDQSASGATLFIEPQAVVAANNEIQEARLKERAEIERILAQLSALVGSVGDSLRINVDVLAELDFIMAKALYGHTIRAVEPRLNENRHIVLKEARHPFIPDDEVVPITVSLGGEFTSLVITGPNTGGKTVTLKTIGLLQLMVQSGLYVPAADETELSVFDAIYADIGDEQSIEQNLSTFSSHMTNIVSMMGKIDFMSLVLFDELGAGTDPTEGAALAIAILDEVKRRGARVAATTHYSELKAYGYNREGVVNASMEFDVESLSPTYRLLIGVPGRSNAFEISKRLGLEDRVIDAARDQVGTDAQSVETMIGRLEEAKQRAESLERELLQEQQRLVEEREEFEREQAEIHQEKNEILAKAEEKATRAVERAQKEAEAVIKRLKELRDAGAVKEHELIEARKQLEQAKPSLQDQRIAKVKAKTNQAPVFAKGEEVKVTTFNQKGYIINQNSNGEYTVQVGIMKVNVKPSDLAKVGEVKSASKTKKRSGGTSITKQSAASAELDLRGVRVEEGLAKLDRFMDQALLSNYEQIRVIHGLGTGAMRQGVQEYLRGNRHVKTHRLGGQGEGGHGVTIIELK</sequence>
<keyword id="KW-0067">ATP-binding</keyword>
<keyword id="KW-0238">DNA-binding</keyword>
<keyword id="KW-0255">Endonuclease</keyword>
<keyword id="KW-0378">Hydrolase</keyword>
<keyword id="KW-0540">Nuclease</keyword>
<keyword id="KW-0547">Nucleotide-binding</keyword>
<keyword id="KW-1185">Reference proteome</keyword>
<keyword id="KW-0694">RNA-binding</keyword>
<keyword id="KW-0699">rRNA-binding</keyword>
<feature type="chain" id="PRO_1000093357" description="Endonuclease MutS2">
    <location>
        <begin position="1"/>
        <end position="788"/>
    </location>
</feature>
<feature type="domain" description="Smr" evidence="1">
    <location>
        <begin position="713"/>
        <end position="788"/>
    </location>
</feature>
<feature type="region of interest" description="Disordered" evidence="2">
    <location>
        <begin position="688"/>
        <end position="708"/>
    </location>
</feature>
<feature type="compositionally biased region" description="Polar residues" evidence="2">
    <location>
        <begin position="699"/>
        <end position="708"/>
    </location>
</feature>
<feature type="binding site" evidence="1">
    <location>
        <begin position="335"/>
        <end position="342"/>
    </location>
    <ligand>
        <name>ATP</name>
        <dbReference type="ChEBI" id="CHEBI:30616"/>
    </ligand>
</feature>
<gene>
    <name evidence="1" type="primary">mutS2</name>
    <name evidence="1" type="synonym">rqcU</name>
    <name type="ordered locus">Exig_2171</name>
</gene>
<comment type="function">
    <text evidence="1">Endonuclease that is involved in the suppression of homologous recombination and thus may have a key role in the control of bacterial genetic diversity.</text>
</comment>
<comment type="function">
    <text evidence="1">Acts as a ribosome collision sensor, splitting the ribosome into its 2 subunits. Detects stalled/collided 70S ribosomes which it binds and splits by an ATP-hydrolysis driven conformational change. Acts upstream of the ribosome quality control system (RQC), a ribosome-associated complex that mediates the extraction of incompletely synthesized nascent chains from stalled ribosomes and their subsequent degradation. Probably generates substrates for RQC.</text>
</comment>
<comment type="subunit">
    <text evidence="1">Homodimer. Binds to stalled ribosomes, contacting rRNA.</text>
</comment>
<comment type="similarity">
    <text evidence="1">Belongs to the DNA mismatch repair MutS family. MutS2 subfamily.</text>
</comment>
<reference key="1">
    <citation type="submission" date="2008-04" db="EMBL/GenBank/DDBJ databases">
        <title>Complete sequence of chromosome of Exiguobacterium sibiricum 255-15.</title>
        <authorList>
            <consortium name="US DOE Joint Genome Institute"/>
            <person name="Copeland A."/>
            <person name="Lucas S."/>
            <person name="Lapidus A."/>
            <person name="Glavina del Rio T."/>
            <person name="Dalin E."/>
            <person name="Tice H."/>
            <person name="Bruce D."/>
            <person name="Goodwin L."/>
            <person name="Pitluck S."/>
            <person name="Kiss H."/>
            <person name="Chertkov O."/>
            <person name="Monk C."/>
            <person name="Brettin T."/>
            <person name="Detter J.C."/>
            <person name="Han C."/>
            <person name="Kuske C.R."/>
            <person name="Schmutz J."/>
            <person name="Larimer F."/>
            <person name="Land M."/>
            <person name="Hauser L."/>
            <person name="Kyrpides N."/>
            <person name="Mikhailova N."/>
            <person name="Vishnivetskaya T."/>
            <person name="Rodrigues D.F."/>
            <person name="Gilichinsky D."/>
            <person name="Tiedje J."/>
            <person name="Richardson P."/>
        </authorList>
    </citation>
    <scope>NUCLEOTIDE SEQUENCE [LARGE SCALE GENOMIC DNA]</scope>
    <source>
        <strain>DSM 17290 / CCUG 55495 / CIP 109462 / JCM 13490 / 255-15</strain>
    </source>
</reference>
<organism>
    <name type="scientific">Exiguobacterium sibiricum (strain DSM 17290 / CCUG 55495 / CIP 109462 / JCM 13490 / 255-15)</name>
    <dbReference type="NCBI Taxonomy" id="262543"/>
    <lineage>
        <taxon>Bacteria</taxon>
        <taxon>Bacillati</taxon>
        <taxon>Bacillota</taxon>
        <taxon>Bacilli</taxon>
        <taxon>Bacillales</taxon>
        <taxon>Bacillales Family XII. Incertae Sedis</taxon>
        <taxon>Exiguobacterium</taxon>
    </lineage>
</organism>
<name>MUTS2_EXIS2</name>
<proteinExistence type="inferred from homology"/>
<accession>B1YJY5</accession>
<evidence type="ECO:0000255" key="1">
    <source>
        <dbReference type="HAMAP-Rule" id="MF_00092"/>
    </source>
</evidence>
<evidence type="ECO:0000256" key="2">
    <source>
        <dbReference type="SAM" id="MobiDB-lite"/>
    </source>
</evidence>